<sequence>MKVLDDWFSRKFSKAVHGNNHGTISLSTLSYIRVHKLVK</sequence>
<protein>
    <recommendedName>
        <fullName>Uncharacterized protein YBR296C-A</fullName>
    </recommendedName>
</protein>
<name>YB296_YEAST</name>
<keyword id="KW-1185">Reference proteome</keyword>
<organism>
    <name type="scientific">Saccharomyces cerevisiae (strain ATCC 204508 / S288c)</name>
    <name type="common">Baker's yeast</name>
    <dbReference type="NCBI Taxonomy" id="559292"/>
    <lineage>
        <taxon>Eukaryota</taxon>
        <taxon>Fungi</taxon>
        <taxon>Dikarya</taxon>
        <taxon>Ascomycota</taxon>
        <taxon>Saccharomycotina</taxon>
        <taxon>Saccharomycetes</taxon>
        <taxon>Saccharomycetales</taxon>
        <taxon>Saccharomycetaceae</taxon>
        <taxon>Saccharomyces</taxon>
    </lineage>
</organism>
<accession>Q8TGU5</accession>
<accession>D6VQU1</accession>
<gene>
    <name type="ordered locus">YBR296C-A</name>
</gene>
<proteinExistence type="predicted"/>
<reference key="1">
    <citation type="journal article" date="1994" name="EMBO J.">
        <title>Complete DNA sequence of yeast chromosome II.</title>
        <authorList>
            <person name="Feldmann H."/>
            <person name="Aigle M."/>
            <person name="Aljinovic G."/>
            <person name="Andre B."/>
            <person name="Baclet M.C."/>
            <person name="Barthe C."/>
            <person name="Baur A."/>
            <person name="Becam A.-M."/>
            <person name="Biteau N."/>
            <person name="Boles E."/>
            <person name="Brandt T."/>
            <person name="Brendel M."/>
            <person name="Brueckner M."/>
            <person name="Bussereau F."/>
            <person name="Christiansen C."/>
            <person name="Contreras R."/>
            <person name="Crouzet M."/>
            <person name="Cziepluch C."/>
            <person name="Demolis N."/>
            <person name="Delaveau T."/>
            <person name="Doignon F."/>
            <person name="Domdey H."/>
            <person name="Duesterhus S."/>
            <person name="Dubois E."/>
            <person name="Dujon B."/>
            <person name="El Bakkoury M."/>
            <person name="Entian K.-D."/>
            <person name="Feuermann M."/>
            <person name="Fiers W."/>
            <person name="Fobo G.M."/>
            <person name="Fritz C."/>
            <person name="Gassenhuber J."/>
            <person name="Glansdorff N."/>
            <person name="Goffeau A."/>
            <person name="Grivell L.A."/>
            <person name="de Haan M."/>
            <person name="Hein C."/>
            <person name="Herbert C.J."/>
            <person name="Hollenberg C.P."/>
            <person name="Holmstroem K."/>
            <person name="Jacq C."/>
            <person name="Jacquet M."/>
            <person name="Jauniaux J.-C."/>
            <person name="Jonniaux J.-L."/>
            <person name="Kallesoee T."/>
            <person name="Kiesau P."/>
            <person name="Kirchrath L."/>
            <person name="Koetter P."/>
            <person name="Korol S."/>
            <person name="Liebl S."/>
            <person name="Logghe M."/>
            <person name="Lohan A.J.E."/>
            <person name="Louis E.J."/>
            <person name="Li Z.Y."/>
            <person name="Maat M.J."/>
            <person name="Mallet L."/>
            <person name="Mannhaupt G."/>
            <person name="Messenguy F."/>
            <person name="Miosga T."/>
            <person name="Molemans F."/>
            <person name="Mueller S."/>
            <person name="Nasr F."/>
            <person name="Obermaier B."/>
            <person name="Perea J."/>
            <person name="Pierard A."/>
            <person name="Piravandi E."/>
            <person name="Pohl F.M."/>
            <person name="Pohl T.M."/>
            <person name="Potier S."/>
            <person name="Proft M."/>
            <person name="Purnelle B."/>
            <person name="Ramezani Rad M."/>
            <person name="Rieger M."/>
            <person name="Rose M."/>
            <person name="Schaaff-Gerstenschlaeger I."/>
            <person name="Scherens B."/>
            <person name="Schwarzlose C."/>
            <person name="Skala J."/>
            <person name="Slonimski P.P."/>
            <person name="Smits P.H.M."/>
            <person name="Souciet J.-L."/>
            <person name="Steensma H.Y."/>
            <person name="Stucka R."/>
            <person name="Urrestarazu L.A."/>
            <person name="van der Aart Q.J.M."/>
            <person name="Van Dyck L."/>
            <person name="Vassarotti A."/>
            <person name="Vetter I."/>
            <person name="Vierendeels F."/>
            <person name="Vissers S."/>
            <person name="Wagner G."/>
            <person name="de Wergifosse P."/>
            <person name="Wolfe K.H."/>
            <person name="Zagulski M."/>
            <person name="Zimmermann F.K."/>
            <person name="Mewes H.-W."/>
            <person name="Kleine K."/>
        </authorList>
    </citation>
    <scope>NUCLEOTIDE SEQUENCE [LARGE SCALE GENOMIC DNA]</scope>
    <source>
        <strain>ATCC 204508 / S288c</strain>
    </source>
</reference>
<reference key="2">
    <citation type="journal article" date="2014" name="G3 (Bethesda)">
        <title>The reference genome sequence of Saccharomyces cerevisiae: Then and now.</title>
        <authorList>
            <person name="Engel S.R."/>
            <person name="Dietrich F.S."/>
            <person name="Fisk D.G."/>
            <person name="Binkley G."/>
            <person name="Balakrishnan R."/>
            <person name="Costanzo M.C."/>
            <person name="Dwight S.S."/>
            <person name="Hitz B.C."/>
            <person name="Karra K."/>
            <person name="Nash R.S."/>
            <person name="Weng S."/>
            <person name="Wong E.D."/>
            <person name="Lloyd P."/>
            <person name="Skrzypek M.S."/>
            <person name="Miyasato S.R."/>
            <person name="Simison M."/>
            <person name="Cherry J.M."/>
        </authorList>
    </citation>
    <scope>GENOME REANNOTATION</scope>
    <source>
        <strain>ATCC 204508 / S288c</strain>
    </source>
</reference>
<reference key="3">
    <citation type="journal article" date="2002" name="Nat. Biotechnol.">
        <title>An integrated approach for finding overlooked genes in yeast.</title>
        <authorList>
            <person name="Kumar A."/>
            <person name="Harrison P.M."/>
            <person name="Cheung K.-H."/>
            <person name="Lan N."/>
            <person name="Echols N."/>
            <person name="Bertone P."/>
            <person name="Miller P."/>
            <person name="Gerstein M.B."/>
            <person name="Snyder M."/>
        </authorList>
    </citation>
    <scope>NUCLEOTIDE SEQUENCE [GENOMIC DNA]</scope>
</reference>
<feature type="chain" id="PRO_0000248445" description="Uncharacterized protein YBR296C-A">
    <location>
        <begin position="1"/>
        <end position="39"/>
    </location>
</feature>
<dbReference type="EMBL" id="Z36166">
    <property type="status" value="NOT_ANNOTATED_CDS"/>
    <property type="molecule type" value="Genomic_DNA"/>
</dbReference>
<dbReference type="EMBL" id="AF479890">
    <property type="protein sequence ID" value="AAL79203.1"/>
    <property type="molecule type" value="Genomic_DNA"/>
</dbReference>
<dbReference type="EMBL" id="BK006936">
    <property type="protein sequence ID" value="DAA07411.1"/>
    <property type="molecule type" value="Genomic_DNA"/>
</dbReference>
<dbReference type="BioGRID" id="36993">
    <property type="interactions" value="26"/>
</dbReference>
<dbReference type="FunCoup" id="Q8TGU5">
    <property type="interactions" value="11"/>
</dbReference>
<dbReference type="IntAct" id="Q8TGU5">
    <property type="interactions" value="13"/>
</dbReference>
<dbReference type="MINT" id="Q8TGU5"/>
<dbReference type="STRING" id="4932.YBR296C-A"/>
<dbReference type="PaxDb" id="4932-YBR296C-A"/>
<dbReference type="EnsemblFungi" id="YBR296C-A_mRNA">
    <property type="protein sequence ID" value="YBR296C-A"/>
    <property type="gene ID" value="YBR296C-A"/>
</dbReference>
<dbReference type="KEGG" id="sce:YBR296C-A"/>
<dbReference type="AGR" id="SGD:S000028605"/>
<dbReference type="SGD" id="S000028605">
    <property type="gene designation" value="YBR296C-A"/>
</dbReference>
<dbReference type="VEuPathDB" id="FungiDB:YBR296C-A"/>
<dbReference type="HOGENOM" id="CLU_3320277_0_0_1"/>
<dbReference type="InParanoid" id="Q8TGU5"/>
<dbReference type="BioCyc" id="YEAST:G3O-29265-MONOMER"/>
<dbReference type="BioGRID-ORCS" id="1466451">
    <property type="hits" value="1 hit in 10 CRISPR screens"/>
</dbReference>
<dbReference type="PRO" id="PR:Q8TGU5"/>
<dbReference type="Proteomes" id="UP000002311">
    <property type="component" value="Chromosome II"/>
</dbReference>
<dbReference type="GO" id="GO:0005777">
    <property type="term" value="C:peroxisome"/>
    <property type="evidence" value="ECO:0000314"/>
    <property type="project" value="SGD"/>
</dbReference>
<dbReference type="GO" id="GO:0010997">
    <property type="term" value="F:anaphase-promoting complex binding"/>
    <property type="evidence" value="ECO:0000353"/>
    <property type="project" value="SGD"/>
</dbReference>
<dbReference type="GO" id="GO:1990948">
    <property type="term" value="F:ubiquitin ligase inhibitor activity"/>
    <property type="evidence" value="ECO:0000314"/>
    <property type="project" value="SGD"/>
</dbReference>
<dbReference type="GO" id="GO:0031397">
    <property type="term" value="P:negative regulation of protein ubiquitination"/>
    <property type="evidence" value="ECO:0000314"/>
    <property type="project" value="SGD"/>
</dbReference>